<evidence type="ECO:0000250" key="1">
    <source>
        <dbReference type="UniProtKB" id="P01282"/>
    </source>
</evidence>
<evidence type="ECO:0000250" key="2">
    <source>
        <dbReference type="UniProtKB" id="P48142"/>
    </source>
</evidence>
<evidence type="ECO:0000255" key="3"/>
<evidence type="ECO:0000269" key="4">
    <source>
    </source>
</evidence>
<evidence type="ECO:0000305" key="5"/>
<sequence length="28" mass="3334">HSDAIFTDNYSRFRKQMAVKKYLNSVLT</sequence>
<organism>
    <name type="scientific">Oncorhynchus mykiss</name>
    <name type="common">Rainbow trout</name>
    <name type="synonym">Salmo gairdneri</name>
    <dbReference type="NCBI Taxonomy" id="8022"/>
    <lineage>
        <taxon>Eukaryota</taxon>
        <taxon>Metazoa</taxon>
        <taxon>Chordata</taxon>
        <taxon>Craniata</taxon>
        <taxon>Vertebrata</taxon>
        <taxon>Euteleostomi</taxon>
        <taxon>Actinopterygii</taxon>
        <taxon>Neopterygii</taxon>
        <taxon>Teleostei</taxon>
        <taxon>Protacanthopterygii</taxon>
        <taxon>Salmoniformes</taxon>
        <taxon>Salmonidae</taxon>
        <taxon>Salmoninae</taxon>
        <taxon>Oncorhynchus</taxon>
    </lineage>
</organism>
<feature type="peptide" id="PRO_0000223496" description="Vasoactive intestinal peptide">
    <location>
        <begin position="1"/>
        <end position="28"/>
    </location>
</feature>
<feature type="modified residue" description="Threonine amide" evidence="2">
    <location>
        <position position="28"/>
    </location>
</feature>
<keyword id="KW-0027">Amidation</keyword>
<keyword id="KW-0903">Direct protein sequencing</keyword>
<keyword id="KW-0372">Hormone</keyword>
<keyword id="KW-0964">Secreted</keyword>
<proteinExistence type="evidence at protein level"/>
<protein>
    <recommendedName>
        <fullName>Vasoactive intestinal peptide</fullName>
        <shortName>VIP</shortName>
    </recommendedName>
    <alternativeName>
        <fullName>Vasoactive intestinal polypeptide</fullName>
    </alternativeName>
</protein>
<name>VIP_ONCMY</name>
<reference evidence="5" key="1">
    <citation type="journal article" date="1995" name="Gen. Comp. Endocrinol.">
        <title>Purification and structural characterization of vasoactive intestinal polypeptide from the trout and bowfin.</title>
        <authorList>
            <person name="Wang Y."/>
            <person name="Conlon J.M."/>
        </authorList>
    </citation>
    <scope>PROTEIN SEQUENCE</scope>
    <source>
        <tissue evidence="4">Stomach</tissue>
    </source>
</reference>
<gene>
    <name type="primary">vip</name>
</gene>
<dbReference type="SMR" id="P84772"/>
<dbReference type="Proteomes" id="UP000694395">
    <property type="component" value="Unplaced"/>
</dbReference>
<dbReference type="GO" id="GO:0005576">
    <property type="term" value="C:extracellular region"/>
    <property type="evidence" value="ECO:0007669"/>
    <property type="project" value="UniProtKB-SubCell"/>
</dbReference>
<dbReference type="GO" id="GO:0043005">
    <property type="term" value="C:neuron projection"/>
    <property type="evidence" value="ECO:0007669"/>
    <property type="project" value="TreeGrafter"/>
</dbReference>
<dbReference type="GO" id="GO:0005184">
    <property type="term" value="F:neuropeptide hormone activity"/>
    <property type="evidence" value="ECO:0000250"/>
    <property type="project" value="UniProtKB"/>
</dbReference>
<dbReference type="GO" id="GO:0051428">
    <property type="term" value="F:peptide hormone receptor binding"/>
    <property type="evidence" value="ECO:0007669"/>
    <property type="project" value="TreeGrafter"/>
</dbReference>
<dbReference type="GO" id="GO:0031891">
    <property type="term" value="F:type 1 vasoactive intestinal polypeptide receptor binding"/>
    <property type="evidence" value="ECO:0000250"/>
    <property type="project" value="UniProtKB"/>
</dbReference>
<dbReference type="GO" id="GO:0007189">
    <property type="term" value="P:adenylate cyclase-activating G protein-coupled receptor signaling pathway"/>
    <property type="evidence" value="ECO:0000250"/>
    <property type="project" value="UniProtKB"/>
</dbReference>
<dbReference type="GO" id="GO:0048242">
    <property type="term" value="P:epinephrine secretion"/>
    <property type="evidence" value="ECO:0007669"/>
    <property type="project" value="TreeGrafter"/>
</dbReference>
<dbReference type="GO" id="GO:0048255">
    <property type="term" value="P:mRNA stabilization"/>
    <property type="evidence" value="ECO:0000250"/>
    <property type="project" value="AgBase"/>
</dbReference>
<dbReference type="GO" id="GO:0070459">
    <property type="term" value="P:prolactin secretion"/>
    <property type="evidence" value="ECO:0000250"/>
    <property type="project" value="AgBase"/>
</dbReference>
<dbReference type="GO" id="GO:0032880">
    <property type="term" value="P:regulation of protein localization"/>
    <property type="evidence" value="ECO:0007669"/>
    <property type="project" value="TreeGrafter"/>
</dbReference>
<dbReference type="Gene3D" id="6.10.250.590">
    <property type="match status" value="1"/>
</dbReference>
<dbReference type="InterPro" id="IPR000532">
    <property type="entry name" value="Glucagon_GIP_secretin_VIP"/>
</dbReference>
<dbReference type="InterPro" id="IPR046963">
    <property type="entry name" value="VIP/GHRH-like"/>
</dbReference>
<dbReference type="PANTHER" id="PTHR11213">
    <property type="entry name" value="GLUCAGON-FAMILY NEUROPEPTIDE"/>
    <property type="match status" value="1"/>
</dbReference>
<dbReference type="PANTHER" id="PTHR11213:SF5">
    <property type="entry name" value="VIP PEPTIDES"/>
    <property type="match status" value="1"/>
</dbReference>
<dbReference type="Pfam" id="PF00123">
    <property type="entry name" value="Hormone_2"/>
    <property type="match status" value="1"/>
</dbReference>
<dbReference type="PRINTS" id="PR00275">
    <property type="entry name" value="GLUCAGON"/>
</dbReference>
<dbReference type="SMART" id="SM00070">
    <property type="entry name" value="GLUCA"/>
    <property type="match status" value="1"/>
</dbReference>
<dbReference type="PROSITE" id="PS00260">
    <property type="entry name" value="GLUCAGON"/>
    <property type="match status" value="1"/>
</dbReference>
<accession>P84772</accession>
<accession>Q9PRI9</accession>
<comment type="function">
    <molecule>Vasoactive intestinal peptide</molecule>
    <text evidence="1">VIP is a neuropeptide involved in a diverse array of physiological processes through activating the PACAP subfamily of class B1 G protein-coupled receptors: VIP receptor 1 (VPR1) and VIP receptor 2 (VPR2). Abundantly expressed throughout the CNS and peripheral nervous systems where they primarily exert neuroprotective and immune modulatory roles. Also causes vasodilation, lowers arterial blood pressure, stimulates myocardial contractility, increases glycogenolysis and relaxes the smooth muscle of trachea, stomach and gall bladder.</text>
</comment>
<comment type="subcellular location">
    <subcellularLocation>
        <location>Secreted</location>
    </subcellularLocation>
</comment>
<comment type="similarity">
    <text evidence="3">Belongs to the glucagon family.</text>
</comment>